<organism>
    <name type="scientific">Mycobacterium bovis (strain BCG / Pasteur 1173P2)</name>
    <dbReference type="NCBI Taxonomy" id="410289"/>
    <lineage>
        <taxon>Bacteria</taxon>
        <taxon>Bacillati</taxon>
        <taxon>Actinomycetota</taxon>
        <taxon>Actinomycetes</taxon>
        <taxon>Mycobacteriales</taxon>
        <taxon>Mycobacteriaceae</taxon>
        <taxon>Mycobacterium</taxon>
        <taxon>Mycobacterium tuberculosis complex</taxon>
    </lineage>
</organism>
<evidence type="ECO:0000255" key="1">
    <source>
        <dbReference type="HAMAP-Rule" id="MF_00054"/>
    </source>
</evidence>
<dbReference type="EMBL" id="AM408590">
    <property type="protein sequence ID" value="CAL70719.1"/>
    <property type="molecule type" value="Genomic_DNA"/>
</dbReference>
<dbReference type="RefSeq" id="WP_003898554.1">
    <property type="nucleotide sequence ID" value="NC_008769.1"/>
</dbReference>
<dbReference type="SMR" id="A1KGG4"/>
<dbReference type="GeneID" id="45424646"/>
<dbReference type="KEGG" id="mbb:BCG_0733"/>
<dbReference type="HOGENOM" id="CLU_002794_4_1_11"/>
<dbReference type="Proteomes" id="UP000001472">
    <property type="component" value="Chromosome"/>
</dbReference>
<dbReference type="GO" id="GO:0005737">
    <property type="term" value="C:cytoplasm"/>
    <property type="evidence" value="ECO:0007669"/>
    <property type="project" value="UniProtKB-SubCell"/>
</dbReference>
<dbReference type="GO" id="GO:0005525">
    <property type="term" value="F:GTP binding"/>
    <property type="evidence" value="ECO:0007669"/>
    <property type="project" value="UniProtKB-UniRule"/>
</dbReference>
<dbReference type="GO" id="GO:0003924">
    <property type="term" value="F:GTPase activity"/>
    <property type="evidence" value="ECO:0007669"/>
    <property type="project" value="InterPro"/>
</dbReference>
<dbReference type="GO" id="GO:0003746">
    <property type="term" value="F:translation elongation factor activity"/>
    <property type="evidence" value="ECO:0007669"/>
    <property type="project" value="UniProtKB-UniRule"/>
</dbReference>
<dbReference type="GO" id="GO:0032790">
    <property type="term" value="P:ribosome disassembly"/>
    <property type="evidence" value="ECO:0007669"/>
    <property type="project" value="TreeGrafter"/>
</dbReference>
<dbReference type="CDD" id="cd01886">
    <property type="entry name" value="EF-G"/>
    <property type="match status" value="1"/>
</dbReference>
<dbReference type="CDD" id="cd16262">
    <property type="entry name" value="EFG_III"/>
    <property type="match status" value="1"/>
</dbReference>
<dbReference type="CDD" id="cd01434">
    <property type="entry name" value="EFG_mtEFG1_IV"/>
    <property type="match status" value="1"/>
</dbReference>
<dbReference type="CDD" id="cd03713">
    <property type="entry name" value="EFG_mtEFG_C"/>
    <property type="match status" value="1"/>
</dbReference>
<dbReference type="CDD" id="cd04088">
    <property type="entry name" value="EFG_mtEFG_II"/>
    <property type="match status" value="1"/>
</dbReference>
<dbReference type="FunFam" id="2.40.30.10:FF:000006">
    <property type="entry name" value="Elongation factor G"/>
    <property type="match status" value="1"/>
</dbReference>
<dbReference type="FunFam" id="3.30.230.10:FF:000003">
    <property type="entry name" value="Elongation factor G"/>
    <property type="match status" value="1"/>
</dbReference>
<dbReference type="FunFam" id="3.30.70.240:FF:000001">
    <property type="entry name" value="Elongation factor G"/>
    <property type="match status" value="1"/>
</dbReference>
<dbReference type="FunFam" id="3.30.70.870:FF:000001">
    <property type="entry name" value="Elongation factor G"/>
    <property type="match status" value="1"/>
</dbReference>
<dbReference type="FunFam" id="3.40.50.300:FF:000029">
    <property type="entry name" value="Elongation factor G"/>
    <property type="match status" value="1"/>
</dbReference>
<dbReference type="Gene3D" id="3.30.230.10">
    <property type="match status" value="1"/>
</dbReference>
<dbReference type="Gene3D" id="3.30.70.240">
    <property type="match status" value="1"/>
</dbReference>
<dbReference type="Gene3D" id="3.30.70.870">
    <property type="entry name" value="Elongation Factor G (Translational Gtpase), domain 3"/>
    <property type="match status" value="1"/>
</dbReference>
<dbReference type="Gene3D" id="3.40.50.300">
    <property type="entry name" value="P-loop containing nucleotide triphosphate hydrolases"/>
    <property type="match status" value="1"/>
</dbReference>
<dbReference type="Gene3D" id="2.40.30.10">
    <property type="entry name" value="Translation factors"/>
    <property type="match status" value="1"/>
</dbReference>
<dbReference type="HAMAP" id="MF_00054_B">
    <property type="entry name" value="EF_G_EF_2_B"/>
    <property type="match status" value="1"/>
</dbReference>
<dbReference type="InterPro" id="IPR041095">
    <property type="entry name" value="EFG_II"/>
</dbReference>
<dbReference type="InterPro" id="IPR009022">
    <property type="entry name" value="EFG_III"/>
</dbReference>
<dbReference type="InterPro" id="IPR035647">
    <property type="entry name" value="EFG_III/V"/>
</dbReference>
<dbReference type="InterPro" id="IPR047872">
    <property type="entry name" value="EFG_IV"/>
</dbReference>
<dbReference type="InterPro" id="IPR035649">
    <property type="entry name" value="EFG_V"/>
</dbReference>
<dbReference type="InterPro" id="IPR000640">
    <property type="entry name" value="EFG_V-like"/>
</dbReference>
<dbReference type="InterPro" id="IPR004161">
    <property type="entry name" value="EFTu-like_2"/>
</dbReference>
<dbReference type="InterPro" id="IPR031157">
    <property type="entry name" value="G_TR_CS"/>
</dbReference>
<dbReference type="InterPro" id="IPR027417">
    <property type="entry name" value="P-loop_NTPase"/>
</dbReference>
<dbReference type="InterPro" id="IPR020568">
    <property type="entry name" value="Ribosomal_Su5_D2-typ_SF"/>
</dbReference>
<dbReference type="InterPro" id="IPR014721">
    <property type="entry name" value="Ribsml_uS5_D2-typ_fold_subgr"/>
</dbReference>
<dbReference type="InterPro" id="IPR005225">
    <property type="entry name" value="Small_GTP-bd"/>
</dbReference>
<dbReference type="InterPro" id="IPR000795">
    <property type="entry name" value="T_Tr_GTP-bd_dom"/>
</dbReference>
<dbReference type="InterPro" id="IPR009000">
    <property type="entry name" value="Transl_B-barrel_sf"/>
</dbReference>
<dbReference type="InterPro" id="IPR004540">
    <property type="entry name" value="Transl_elong_EFG/EF2"/>
</dbReference>
<dbReference type="InterPro" id="IPR005517">
    <property type="entry name" value="Transl_elong_EFG/EF2_IV"/>
</dbReference>
<dbReference type="NCBIfam" id="TIGR00484">
    <property type="entry name" value="EF-G"/>
    <property type="match status" value="1"/>
</dbReference>
<dbReference type="NCBIfam" id="NF009381">
    <property type="entry name" value="PRK12740.1-5"/>
    <property type="match status" value="1"/>
</dbReference>
<dbReference type="NCBIfam" id="TIGR00231">
    <property type="entry name" value="small_GTP"/>
    <property type="match status" value="1"/>
</dbReference>
<dbReference type="PANTHER" id="PTHR43261:SF1">
    <property type="entry name" value="RIBOSOME-RELEASING FACTOR 2, MITOCHONDRIAL"/>
    <property type="match status" value="1"/>
</dbReference>
<dbReference type="PANTHER" id="PTHR43261">
    <property type="entry name" value="TRANSLATION ELONGATION FACTOR G-RELATED"/>
    <property type="match status" value="1"/>
</dbReference>
<dbReference type="Pfam" id="PF00679">
    <property type="entry name" value="EFG_C"/>
    <property type="match status" value="1"/>
</dbReference>
<dbReference type="Pfam" id="PF14492">
    <property type="entry name" value="EFG_III"/>
    <property type="match status" value="1"/>
</dbReference>
<dbReference type="Pfam" id="PF03764">
    <property type="entry name" value="EFG_IV"/>
    <property type="match status" value="1"/>
</dbReference>
<dbReference type="Pfam" id="PF00009">
    <property type="entry name" value="GTP_EFTU"/>
    <property type="match status" value="1"/>
</dbReference>
<dbReference type="Pfam" id="PF03144">
    <property type="entry name" value="GTP_EFTU_D2"/>
    <property type="match status" value="1"/>
</dbReference>
<dbReference type="PRINTS" id="PR00315">
    <property type="entry name" value="ELONGATNFCT"/>
</dbReference>
<dbReference type="SMART" id="SM00838">
    <property type="entry name" value="EFG_C"/>
    <property type="match status" value="1"/>
</dbReference>
<dbReference type="SMART" id="SM00889">
    <property type="entry name" value="EFG_IV"/>
    <property type="match status" value="1"/>
</dbReference>
<dbReference type="SUPFAM" id="SSF54980">
    <property type="entry name" value="EF-G C-terminal domain-like"/>
    <property type="match status" value="2"/>
</dbReference>
<dbReference type="SUPFAM" id="SSF52540">
    <property type="entry name" value="P-loop containing nucleoside triphosphate hydrolases"/>
    <property type="match status" value="1"/>
</dbReference>
<dbReference type="SUPFAM" id="SSF54211">
    <property type="entry name" value="Ribosomal protein S5 domain 2-like"/>
    <property type="match status" value="1"/>
</dbReference>
<dbReference type="SUPFAM" id="SSF50447">
    <property type="entry name" value="Translation proteins"/>
    <property type="match status" value="1"/>
</dbReference>
<dbReference type="PROSITE" id="PS00301">
    <property type="entry name" value="G_TR_1"/>
    <property type="match status" value="1"/>
</dbReference>
<dbReference type="PROSITE" id="PS51722">
    <property type="entry name" value="G_TR_2"/>
    <property type="match status" value="1"/>
</dbReference>
<feature type="chain" id="PRO_1000008853" description="Elongation factor G">
    <location>
        <begin position="1"/>
        <end position="701"/>
    </location>
</feature>
<feature type="domain" description="tr-type G">
    <location>
        <begin position="11"/>
        <end position="287"/>
    </location>
</feature>
<feature type="binding site" evidence="1">
    <location>
        <begin position="20"/>
        <end position="27"/>
    </location>
    <ligand>
        <name>GTP</name>
        <dbReference type="ChEBI" id="CHEBI:37565"/>
    </ligand>
</feature>
<feature type="binding site" evidence="1">
    <location>
        <begin position="84"/>
        <end position="88"/>
    </location>
    <ligand>
        <name>GTP</name>
        <dbReference type="ChEBI" id="CHEBI:37565"/>
    </ligand>
</feature>
<feature type="binding site" evidence="1">
    <location>
        <begin position="138"/>
        <end position="141"/>
    </location>
    <ligand>
        <name>GTP</name>
        <dbReference type="ChEBI" id="CHEBI:37565"/>
    </ligand>
</feature>
<reference key="1">
    <citation type="journal article" date="2007" name="Proc. Natl. Acad. Sci. U.S.A.">
        <title>Genome plasticity of BCG and impact on vaccine efficacy.</title>
        <authorList>
            <person name="Brosch R."/>
            <person name="Gordon S.V."/>
            <person name="Garnier T."/>
            <person name="Eiglmeier K."/>
            <person name="Frigui W."/>
            <person name="Valenti P."/>
            <person name="Dos Santos S."/>
            <person name="Duthoy S."/>
            <person name="Lacroix C."/>
            <person name="Garcia-Pelayo C."/>
            <person name="Inwald J.K."/>
            <person name="Golby P."/>
            <person name="Garcia J.N."/>
            <person name="Hewinson R.G."/>
            <person name="Behr M.A."/>
            <person name="Quail M.A."/>
            <person name="Churcher C."/>
            <person name="Barrell B.G."/>
            <person name="Parkhill J."/>
            <person name="Cole S.T."/>
        </authorList>
    </citation>
    <scope>NUCLEOTIDE SEQUENCE [LARGE SCALE GENOMIC DNA]</scope>
    <source>
        <strain>BCG / Pasteur 1173P2</strain>
    </source>
</reference>
<sequence length="701" mass="77203">MAQKDVLTDLSRVRNFGIMAHIDAGKTTTTERILYYTGINYKIGEVHDGAATMDWMEQEQERGITITSAATTTFWKDNQLNIIDTPGHVDFTVEVERNLRVLDGAVAVFDGKEGVEPQSEQVWRQADKYDVPRICFVNKMDKIGADFYFSVRTMGERLGANAVPIQLPVGAEADFEGVVDLVEMNAKVWRGETKLGETYDTVEIPADLAEQAEEYRTKLLEVVAESDEHLLEKYLGGEELTVDEIKGAIRKLTIASEIYPVLCGSAFKNKGVQPMLDAVVDYLPSPLDVPPAIGHAPAKEDEEVVRKATTDEPFAALAFKIATHPFFGKLTYIRVYSGTVESGSQVINATKGKKERLGKLFQMHSNKENPVDRASAGHIYAVIGLKDTTTGDTLSDPNQQIVLESMTFPDPVIEVAIEPKTKSDQEKLSLSIQKLAEEDPTFKVHLDSETGQTVIGGMGELHLDILVDRMRREFKVEANVGKPQVAYKETIKRLVQNVEYTHKKQTGGSGQFAKVIINLEPFTGEEGATYEFESKVTGGRIPREYIPSVDAGAQDAMQYGVLAGYPLVNLKVTLLDGAYHEVDSSEMAFKIAGSQVLKKAAALAQPVILEPIMAVEVTTPEDYMGDVIGDLNSRRGQIQAMEERAGARVVRAHVPLSEMFGYVGDLRSKTQGRANYSMVFDSYSEVPANVSKEIIAKATGE</sequence>
<protein>
    <recommendedName>
        <fullName evidence="1">Elongation factor G</fullName>
        <shortName evidence="1">EF-G</shortName>
    </recommendedName>
</protein>
<accession>A1KGG4</accession>
<name>EFG_MYCBP</name>
<keyword id="KW-0963">Cytoplasm</keyword>
<keyword id="KW-0251">Elongation factor</keyword>
<keyword id="KW-0342">GTP-binding</keyword>
<keyword id="KW-0547">Nucleotide-binding</keyword>
<keyword id="KW-0648">Protein biosynthesis</keyword>
<proteinExistence type="inferred from homology"/>
<gene>
    <name evidence="1" type="primary">fusA</name>
    <name type="ordered locus">BCG_0733</name>
</gene>
<comment type="function">
    <text evidence="1">Catalyzes the GTP-dependent ribosomal translocation step during translation elongation. During this step, the ribosome changes from the pre-translocational (PRE) to the post-translocational (POST) state as the newly formed A-site-bound peptidyl-tRNA and P-site-bound deacylated tRNA move to the P and E sites, respectively. Catalyzes the coordinated movement of the two tRNA molecules, the mRNA and conformational changes in the ribosome.</text>
</comment>
<comment type="subcellular location">
    <subcellularLocation>
        <location evidence="1">Cytoplasm</location>
    </subcellularLocation>
</comment>
<comment type="similarity">
    <text evidence="1">Belongs to the TRAFAC class translation factor GTPase superfamily. Classic translation factor GTPase family. EF-G/EF-2 subfamily.</text>
</comment>